<sequence>MSRVAKSSITIPTSVEVIITGNLMSVKGRLGQLNMSIHPCVAIMNTNSKLSFDIITIEKKEQRKAWAQAGTARANTANLIQGVTEGWKKKLTLIGVGYRAKVMGKILDLTLGFSHPINYKFPEGIIVETPSQTEIIIKGMDKQKVGQVASEIRSYRPPEPYKGKGVRYIDEQVIHKETKKK</sequence>
<name>RL6_VESOH</name>
<gene>
    <name evidence="1" type="primary">rplF</name>
    <name type="ordered locus">COSY_0184</name>
</gene>
<feature type="chain" id="PRO_1000055328" description="Large ribosomal subunit protein uL6">
    <location>
        <begin position="1"/>
        <end position="181"/>
    </location>
</feature>
<protein>
    <recommendedName>
        <fullName evidence="1">Large ribosomal subunit protein uL6</fullName>
    </recommendedName>
    <alternativeName>
        <fullName evidence="2">50S ribosomal protein L6</fullName>
    </alternativeName>
</protein>
<reference key="1">
    <citation type="journal article" date="2007" name="Curr. Biol.">
        <title>Reduced genome of the thioautotrophic intracellular symbiont in a deep-sea clam, Calyptogena okutanii.</title>
        <authorList>
            <person name="Kuwahara H."/>
            <person name="Yoshida T."/>
            <person name="Takaki Y."/>
            <person name="Shimamura S."/>
            <person name="Nishi S."/>
            <person name="Harada M."/>
            <person name="Matsuyama K."/>
            <person name="Takishita K."/>
            <person name="Kawato M."/>
            <person name="Uematsu K."/>
            <person name="Fujiwara Y."/>
            <person name="Sato T."/>
            <person name="Kato C."/>
            <person name="Kitagawa M."/>
            <person name="Kato I."/>
            <person name="Maruyama T."/>
        </authorList>
    </citation>
    <scope>NUCLEOTIDE SEQUENCE [LARGE SCALE GENOMIC DNA]</scope>
    <source>
        <strain>HA</strain>
    </source>
</reference>
<accession>A5CXL9</accession>
<evidence type="ECO:0000255" key="1">
    <source>
        <dbReference type="HAMAP-Rule" id="MF_01365"/>
    </source>
</evidence>
<evidence type="ECO:0000305" key="2"/>
<keyword id="KW-1185">Reference proteome</keyword>
<keyword id="KW-0687">Ribonucleoprotein</keyword>
<keyword id="KW-0689">Ribosomal protein</keyword>
<keyword id="KW-0694">RNA-binding</keyword>
<keyword id="KW-0699">rRNA-binding</keyword>
<proteinExistence type="inferred from homology"/>
<organism>
    <name type="scientific">Vesicomyosocius okutanii subsp. Calyptogena okutanii (strain HA)</name>
    <dbReference type="NCBI Taxonomy" id="412965"/>
    <lineage>
        <taxon>Bacteria</taxon>
        <taxon>Pseudomonadati</taxon>
        <taxon>Pseudomonadota</taxon>
        <taxon>Gammaproteobacteria</taxon>
        <taxon>Candidatus Pseudothioglobaceae</taxon>
        <taxon>Candidatus Vesicomyosocius</taxon>
    </lineage>
</organism>
<dbReference type="EMBL" id="AP009247">
    <property type="protein sequence ID" value="BAF61314.1"/>
    <property type="molecule type" value="Genomic_DNA"/>
</dbReference>
<dbReference type="RefSeq" id="WP_011929584.1">
    <property type="nucleotide sequence ID" value="NC_009465.1"/>
</dbReference>
<dbReference type="SMR" id="A5CXL9"/>
<dbReference type="STRING" id="412965.COSY_0184"/>
<dbReference type="KEGG" id="vok:COSY_0184"/>
<dbReference type="eggNOG" id="COG0097">
    <property type="taxonomic scope" value="Bacteria"/>
</dbReference>
<dbReference type="HOGENOM" id="CLU_065464_1_2_6"/>
<dbReference type="OrthoDB" id="9805007at2"/>
<dbReference type="Proteomes" id="UP000000247">
    <property type="component" value="Chromosome"/>
</dbReference>
<dbReference type="GO" id="GO:0022625">
    <property type="term" value="C:cytosolic large ribosomal subunit"/>
    <property type="evidence" value="ECO:0007669"/>
    <property type="project" value="TreeGrafter"/>
</dbReference>
<dbReference type="GO" id="GO:0019843">
    <property type="term" value="F:rRNA binding"/>
    <property type="evidence" value="ECO:0007669"/>
    <property type="project" value="UniProtKB-UniRule"/>
</dbReference>
<dbReference type="GO" id="GO:0003735">
    <property type="term" value="F:structural constituent of ribosome"/>
    <property type="evidence" value="ECO:0007669"/>
    <property type="project" value="InterPro"/>
</dbReference>
<dbReference type="GO" id="GO:0002181">
    <property type="term" value="P:cytoplasmic translation"/>
    <property type="evidence" value="ECO:0007669"/>
    <property type="project" value="TreeGrafter"/>
</dbReference>
<dbReference type="FunFam" id="3.90.930.12:FF:000001">
    <property type="entry name" value="50S ribosomal protein L6"/>
    <property type="match status" value="1"/>
</dbReference>
<dbReference type="Gene3D" id="3.90.930.12">
    <property type="entry name" value="Ribosomal protein L6, alpha-beta domain"/>
    <property type="match status" value="2"/>
</dbReference>
<dbReference type="HAMAP" id="MF_01365_B">
    <property type="entry name" value="Ribosomal_uL6_B"/>
    <property type="match status" value="1"/>
</dbReference>
<dbReference type="InterPro" id="IPR000702">
    <property type="entry name" value="Ribosomal_uL6-like"/>
</dbReference>
<dbReference type="InterPro" id="IPR036789">
    <property type="entry name" value="Ribosomal_uL6-like_a/b-dom_sf"/>
</dbReference>
<dbReference type="InterPro" id="IPR020040">
    <property type="entry name" value="Ribosomal_uL6_a/b-dom"/>
</dbReference>
<dbReference type="InterPro" id="IPR019906">
    <property type="entry name" value="Ribosomal_uL6_bac-type"/>
</dbReference>
<dbReference type="InterPro" id="IPR002358">
    <property type="entry name" value="Ribosomal_uL6_CS"/>
</dbReference>
<dbReference type="NCBIfam" id="TIGR03654">
    <property type="entry name" value="L6_bact"/>
    <property type="match status" value="1"/>
</dbReference>
<dbReference type="PANTHER" id="PTHR11655">
    <property type="entry name" value="60S/50S RIBOSOMAL PROTEIN L6/L9"/>
    <property type="match status" value="1"/>
</dbReference>
<dbReference type="PANTHER" id="PTHR11655:SF14">
    <property type="entry name" value="LARGE RIBOSOMAL SUBUNIT PROTEIN UL6M"/>
    <property type="match status" value="1"/>
</dbReference>
<dbReference type="Pfam" id="PF00347">
    <property type="entry name" value="Ribosomal_L6"/>
    <property type="match status" value="2"/>
</dbReference>
<dbReference type="PIRSF" id="PIRSF002162">
    <property type="entry name" value="Ribosomal_L6"/>
    <property type="match status" value="1"/>
</dbReference>
<dbReference type="PRINTS" id="PR00059">
    <property type="entry name" value="RIBOSOMALL6"/>
</dbReference>
<dbReference type="SUPFAM" id="SSF56053">
    <property type="entry name" value="Ribosomal protein L6"/>
    <property type="match status" value="2"/>
</dbReference>
<dbReference type="PROSITE" id="PS00525">
    <property type="entry name" value="RIBOSOMAL_L6_1"/>
    <property type="match status" value="1"/>
</dbReference>
<comment type="function">
    <text evidence="1">This protein binds to the 23S rRNA, and is important in its secondary structure. It is located near the subunit interface in the base of the L7/L12 stalk, and near the tRNA binding site of the peptidyltransferase center.</text>
</comment>
<comment type="subunit">
    <text evidence="1">Part of the 50S ribosomal subunit.</text>
</comment>
<comment type="similarity">
    <text evidence="1">Belongs to the universal ribosomal protein uL6 family.</text>
</comment>